<proteinExistence type="inferred from homology"/>
<sequence length="211" mass="23186">MISYYFQGLALGAAMILPLGPQNAFVMNQGIRRQYHLMIALLCALSDLVLISAGIFGGSALLMQSPWLLALVTWGGVAFLLWYGFGALKTAMSSNLELASAEVMKQGRWKIIATMLAVTWLNPHVYLDTFVVLGSLGGQLAMEPKRWFALGTISASFLWFFGLALLAAWLAPRLRTAKAQRIINILVGVVMWLIAFQLAREGVAHMHALFN</sequence>
<keyword id="KW-0029">Amino-acid transport</keyword>
<keyword id="KW-0997">Cell inner membrane</keyword>
<keyword id="KW-1003">Cell membrane</keyword>
<keyword id="KW-0472">Membrane</keyword>
<keyword id="KW-0812">Transmembrane</keyword>
<keyword id="KW-1133">Transmembrane helix</keyword>
<keyword id="KW-0813">Transport</keyword>
<protein>
    <recommendedName>
        <fullName evidence="1">Arginine exporter protein ArgO</fullName>
    </recommendedName>
</protein>
<evidence type="ECO:0000255" key="1">
    <source>
        <dbReference type="HAMAP-Rule" id="MF_01901"/>
    </source>
</evidence>
<organism>
    <name type="scientific">Salmonella schwarzengrund (strain CVM19633)</name>
    <dbReference type="NCBI Taxonomy" id="439843"/>
    <lineage>
        <taxon>Bacteria</taxon>
        <taxon>Pseudomonadati</taxon>
        <taxon>Pseudomonadota</taxon>
        <taxon>Gammaproteobacteria</taxon>
        <taxon>Enterobacterales</taxon>
        <taxon>Enterobacteriaceae</taxon>
        <taxon>Salmonella</taxon>
    </lineage>
</organism>
<reference key="1">
    <citation type="journal article" date="2011" name="J. Bacteriol.">
        <title>Comparative genomics of 28 Salmonella enterica isolates: evidence for CRISPR-mediated adaptive sublineage evolution.</title>
        <authorList>
            <person name="Fricke W.F."/>
            <person name="Mammel M.K."/>
            <person name="McDermott P.F."/>
            <person name="Tartera C."/>
            <person name="White D.G."/>
            <person name="Leclerc J.E."/>
            <person name="Ravel J."/>
            <person name="Cebula T.A."/>
        </authorList>
    </citation>
    <scope>NUCLEOTIDE SEQUENCE [LARGE SCALE GENOMIC DNA]</scope>
    <source>
        <strain>CVM19633</strain>
    </source>
</reference>
<dbReference type="EMBL" id="CP001127">
    <property type="protein sequence ID" value="ACF90721.1"/>
    <property type="molecule type" value="Genomic_DNA"/>
</dbReference>
<dbReference type="RefSeq" id="WP_000626876.1">
    <property type="nucleotide sequence ID" value="NC_011094.1"/>
</dbReference>
<dbReference type="KEGG" id="sew:SeSA_A3239"/>
<dbReference type="HOGENOM" id="CLU_087840_0_1_6"/>
<dbReference type="Proteomes" id="UP000001865">
    <property type="component" value="Chromosome"/>
</dbReference>
<dbReference type="GO" id="GO:0005886">
    <property type="term" value="C:plasma membrane"/>
    <property type="evidence" value="ECO:0007669"/>
    <property type="project" value="UniProtKB-SubCell"/>
</dbReference>
<dbReference type="GO" id="GO:0061459">
    <property type="term" value="F:L-arginine transmembrane transporter activity"/>
    <property type="evidence" value="ECO:0007669"/>
    <property type="project" value="UniProtKB-UniRule"/>
</dbReference>
<dbReference type="HAMAP" id="MF_01901">
    <property type="entry name" value="ArgO"/>
    <property type="match status" value="1"/>
</dbReference>
<dbReference type="InterPro" id="IPR023445">
    <property type="entry name" value="Arg_export_ArgO_enterobac"/>
</dbReference>
<dbReference type="InterPro" id="IPR001123">
    <property type="entry name" value="LeuE-type"/>
</dbReference>
<dbReference type="InterPro" id="IPR004777">
    <property type="entry name" value="Lys/arg_exporter"/>
</dbReference>
<dbReference type="NCBIfam" id="TIGR00948">
    <property type="entry name" value="2a75"/>
    <property type="match status" value="1"/>
</dbReference>
<dbReference type="NCBIfam" id="NF006801">
    <property type="entry name" value="PRK09304.1"/>
    <property type="match status" value="1"/>
</dbReference>
<dbReference type="PANTHER" id="PTHR30086">
    <property type="entry name" value="ARGININE EXPORTER PROTEIN ARGO"/>
    <property type="match status" value="1"/>
</dbReference>
<dbReference type="PANTHER" id="PTHR30086:SF20">
    <property type="entry name" value="ARGININE EXPORTER PROTEIN ARGO-RELATED"/>
    <property type="match status" value="1"/>
</dbReference>
<dbReference type="Pfam" id="PF01810">
    <property type="entry name" value="LysE"/>
    <property type="match status" value="1"/>
</dbReference>
<accession>B4TV35</accession>
<comment type="function">
    <text evidence="1">Involved in the export of arginine. Important to control the intracellular level of arginine and the correct balance between arginine and lysine.</text>
</comment>
<comment type="catalytic activity">
    <reaction evidence="1">
        <text>L-arginine(in) = L-arginine(out)</text>
        <dbReference type="Rhea" id="RHEA:32143"/>
        <dbReference type="ChEBI" id="CHEBI:32682"/>
    </reaction>
    <physiologicalReaction direction="left-to-right" evidence="1">
        <dbReference type="Rhea" id="RHEA:32144"/>
    </physiologicalReaction>
</comment>
<comment type="subcellular location">
    <subcellularLocation>
        <location evidence="1">Cell inner membrane</location>
        <topology evidence="1">Multi-pass membrane protein</topology>
    </subcellularLocation>
</comment>
<comment type="similarity">
    <text evidence="1">Belongs to the LysE/ArgO transporter (TC 2.A.75) family.</text>
</comment>
<feature type="chain" id="PRO_1000188725" description="Arginine exporter protein ArgO">
    <location>
        <begin position="1"/>
        <end position="211"/>
    </location>
</feature>
<feature type="transmembrane region" description="Helical" evidence="1">
    <location>
        <begin position="1"/>
        <end position="21"/>
    </location>
</feature>
<feature type="transmembrane region" description="Helical" evidence="1">
    <location>
        <begin position="37"/>
        <end position="57"/>
    </location>
</feature>
<feature type="transmembrane region" description="Helical" evidence="1">
    <location>
        <begin position="68"/>
        <end position="88"/>
    </location>
</feature>
<feature type="transmembrane region" description="Helical" evidence="1">
    <location>
        <begin position="111"/>
        <end position="131"/>
    </location>
</feature>
<feature type="transmembrane region" description="Helical" evidence="1">
    <location>
        <begin position="147"/>
        <end position="167"/>
    </location>
</feature>
<feature type="transmembrane region" description="Helical" evidence="1">
    <location>
        <begin position="179"/>
        <end position="199"/>
    </location>
</feature>
<name>ARGO_SALSV</name>
<gene>
    <name evidence="1" type="primary">argO</name>
    <name type="ordered locus">SeSA_A3239</name>
</gene>